<gene>
    <name type="ordered locus">Geob_1494</name>
</gene>
<evidence type="ECO:0000255" key="1">
    <source>
        <dbReference type="HAMAP-Rule" id="MF_00048"/>
    </source>
</evidence>
<dbReference type="EMBL" id="CP001390">
    <property type="protein sequence ID" value="ACM19853.1"/>
    <property type="molecule type" value="Genomic_DNA"/>
</dbReference>
<dbReference type="RefSeq" id="WP_012646582.1">
    <property type="nucleotide sequence ID" value="NC_011979.1"/>
</dbReference>
<dbReference type="SMR" id="B9M598"/>
<dbReference type="STRING" id="316067.Geob_1494"/>
<dbReference type="KEGG" id="geo:Geob_1494"/>
<dbReference type="eggNOG" id="COG0792">
    <property type="taxonomic scope" value="Bacteria"/>
</dbReference>
<dbReference type="HOGENOM" id="CLU_115353_2_3_7"/>
<dbReference type="OrthoDB" id="9794876at2"/>
<dbReference type="Proteomes" id="UP000007721">
    <property type="component" value="Chromosome"/>
</dbReference>
<dbReference type="GO" id="GO:0003676">
    <property type="term" value="F:nucleic acid binding"/>
    <property type="evidence" value="ECO:0007669"/>
    <property type="project" value="InterPro"/>
</dbReference>
<dbReference type="CDD" id="cd20736">
    <property type="entry name" value="PoNe_Nuclease"/>
    <property type="match status" value="1"/>
</dbReference>
<dbReference type="Gene3D" id="3.40.1350.10">
    <property type="match status" value="1"/>
</dbReference>
<dbReference type="HAMAP" id="MF_00048">
    <property type="entry name" value="UPF0102"/>
    <property type="match status" value="1"/>
</dbReference>
<dbReference type="InterPro" id="IPR011335">
    <property type="entry name" value="Restrct_endonuc-II-like"/>
</dbReference>
<dbReference type="InterPro" id="IPR011856">
    <property type="entry name" value="tRNA_endonuc-like_dom_sf"/>
</dbReference>
<dbReference type="InterPro" id="IPR003509">
    <property type="entry name" value="UPF0102_YraN-like"/>
</dbReference>
<dbReference type="NCBIfam" id="NF009150">
    <property type="entry name" value="PRK12497.1-3"/>
    <property type="match status" value="1"/>
</dbReference>
<dbReference type="NCBIfam" id="NF009154">
    <property type="entry name" value="PRK12497.3-3"/>
    <property type="match status" value="1"/>
</dbReference>
<dbReference type="NCBIfam" id="NF011268">
    <property type="entry name" value="PRK14675.1"/>
    <property type="match status" value="1"/>
</dbReference>
<dbReference type="NCBIfam" id="TIGR00252">
    <property type="entry name" value="YraN family protein"/>
    <property type="match status" value="1"/>
</dbReference>
<dbReference type="PANTHER" id="PTHR34039">
    <property type="entry name" value="UPF0102 PROTEIN YRAN"/>
    <property type="match status" value="1"/>
</dbReference>
<dbReference type="PANTHER" id="PTHR34039:SF1">
    <property type="entry name" value="UPF0102 PROTEIN YRAN"/>
    <property type="match status" value="1"/>
</dbReference>
<dbReference type="Pfam" id="PF02021">
    <property type="entry name" value="UPF0102"/>
    <property type="match status" value="1"/>
</dbReference>
<dbReference type="SUPFAM" id="SSF52980">
    <property type="entry name" value="Restriction endonuclease-like"/>
    <property type="match status" value="1"/>
</dbReference>
<comment type="similarity">
    <text evidence="1">Belongs to the UPF0102 family.</text>
</comment>
<name>Y1494_GEODF</name>
<protein>
    <recommendedName>
        <fullName evidence="1">UPF0102 protein Geob_1494</fullName>
    </recommendedName>
</protein>
<sequence>MRGEGKNDNKTLGEVGEAIAVTFLKGLHFSILERNFRCKCGEIDIIARDGRTLVFVEVKTRKNTAFGVPQLAVTPFKQRQISKAALTWLAQKKMQDAAARFDVIAILQPDHAVPEIEHIKDAFDLAY</sequence>
<keyword id="KW-1185">Reference proteome</keyword>
<proteinExistence type="inferred from homology"/>
<feature type="chain" id="PRO_1000200147" description="UPF0102 protein Geob_1494">
    <location>
        <begin position="1"/>
        <end position="127"/>
    </location>
</feature>
<reference key="1">
    <citation type="submission" date="2009-01" db="EMBL/GenBank/DDBJ databases">
        <title>Complete sequence of Geobacter sp. FRC-32.</title>
        <authorList>
            <consortium name="US DOE Joint Genome Institute"/>
            <person name="Lucas S."/>
            <person name="Copeland A."/>
            <person name="Lapidus A."/>
            <person name="Glavina del Rio T."/>
            <person name="Dalin E."/>
            <person name="Tice H."/>
            <person name="Bruce D."/>
            <person name="Goodwin L."/>
            <person name="Pitluck S."/>
            <person name="Saunders E."/>
            <person name="Brettin T."/>
            <person name="Detter J.C."/>
            <person name="Han C."/>
            <person name="Larimer F."/>
            <person name="Land M."/>
            <person name="Hauser L."/>
            <person name="Kyrpides N."/>
            <person name="Ovchinnikova G."/>
            <person name="Kostka J."/>
            <person name="Richardson P."/>
        </authorList>
    </citation>
    <scope>NUCLEOTIDE SEQUENCE [LARGE SCALE GENOMIC DNA]</scope>
    <source>
        <strain>DSM 22248 / JCM 15807 / FRC-32</strain>
    </source>
</reference>
<organism>
    <name type="scientific">Geotalea daltonii (strain DSM 22248 / JCM 15807 / FRC-32)</name>
    <name type="common">Geobacter daltonii</name>
    <dbReference type="NCBI Taxonomy" id="316067"/>
    <lineage>
        <taxon>Bacteria</taxon>
        <taxon>Pseudomonadati</taxon>
        <taxon>Thermodesulfobacteriota</taxon>
        <taxon>Desulfuromonadia</taxon>
        <taxon>Geobacterales</taxon>
        <taxon>Geobacteraceae</taxon>
        <taxon>Geotalea</taxon>
    </lineage>
</organism>
<accession>B9M598</accession>